<sequence length="142" mass="15229">MLEEFKKFALRGNVVDLAVGVIIGAAFGAIVNSLVQDVIMPIIGAITGGLDFSNYYIPLSSKVQAGMPYAEAKKVGAVIGYGQFLTLAVNFTIIAFVLFMVIRAMNGLKSKEEAKPKPEAEVPADVKLLAEIRDLLAARREA</sequence>
<proteinExistence type="inferred from homology"/>
<keyword id="KW-0997">Cell inner membrane</keyword>
<keyword id="KW-1003">Cell membrane</keyword>
<keyword id="KW-0407">Ion channel</keyword>
<keyword id="KW-0406">Ion transport</keyword>
<keyword id="KW-0472">Membrane</keyword>
<keyword id="KW-0812">Transmembrane</keyword>
<keyword id="KW-1133">Transmembrane helix</keyword>
<keyword id="KW-0813">Transport</keyword>
<feature type="chain" id="PRO_1000094906" description="Large-conductance mechanosensitive channel">
    <location>
        <begin position="1"/>
        <end position="142"/>
    </location>
</feature>
<feature type="transmembrane region" description="Helical" evidence="1">
    <location>
        <begin position="14"/>
        <end position="34"/>
    </location>
</feature>
<feature type="transmembrane region" description="Helical" evidence="1">
    <location>
        <begin position="38"/>
        <end position="58"/>
    </location>
</feature>
<feature type="transmembrane region" description="Helical" evidence="1">
    <location>
        <begin position="82"/>
        <end position="102"/>
    </location>
</feature>
<name>MSCL_METPB</name>
<gene>
    <name evidence="1" type="primary">mscL</name>
    <name type="ordered locus">Mpop_2607</name>
</gene>
<accession>B1ZC68</accession>
<comment type="function">
    <text evidence="1">Channel that opens in response to stretch forces in the membrane lipid bilayer. May participate in the regulation of osmotic pressure changes within the cell.</text>
</comment>
<comment type="subunit">
    <text evidence="1">Homopentamer.</text>
</comment>
<comment type="subcellular location">
    <subcellularLocation>
        <location evidence="1">Cell inner membrane</location>
        <topology evidence="1">Multi-pass membrane protein</topology>
    </subcellularLocation>
</comment>
<comment type="similarity">
    <text evidence="1">Belongs to the MscL family.</text>
</comment>
<protein>
    <recommendedName>
        <fullName evidence="1">Large-conductance mechanosensitive channel</fullName>
    </recommendedName>
</protein>
<organism>
    <name type="scientific">Methylorubrum populi (strain ATCC BAA-705 / NCIMB 13946 / BJ001)</name>
    <name type="common">Methylobacterium populi</name>
    <dbReference type="NCBI Taxonomy" id="441620"/>
    <lineage>
        <taxon>Bacteria</taxon>
        <taxon>Pseudomonadati</taxon>
        <taxon>Pseudomonadota</taxon>
        <taxon>Alphaproteobacteria</taxon>
        <taxon>Hyphomicrobiales</taxon>
        <taxon>Methylobacteriaceae</taxon>
        <taxon>Methylorubrum</taxon>
    </lineage>
</organism>
<dbReference type="EMBL" id="CP001029">
    <property type="protein sequence ID" value="ACB80764.1"/>
    <property type="molecule type" value="Genomic_DNA"/>
</dbReference>
<dbReference type="RefSeq" id="WP_012454486.1">
    <property type="nucleotide sequence ID" value="NC_010725.1"/>
</dbReference>
<dbReference type="SMR" id="B1ZC68"/>
<dbReference type="STRING" id="441620.Mpop_2607"/>
<dbReference type="KEGG" id="mpo:Mpop_2607"/>
<dbReference type="eggNOG" id="COG1970">
    <property type="taxonomic scope" value="Bacteria"/>
</dbReference>
<dbReference type="HOGENOM" id="CLU_095787_0_1_5"/>
<dbReference type="OrthoDB" id="9810350at2"/>
<dbReference type="Proteomes" id="UP000007136">
    <property type="component" value="Chromosome"/>
</dbReference>
<dbReference type="GO" id="GO:0005886">
    <property type="term" value="C:plasma membrane"/>
    <property type="evidence" value="ECO:0007669"/>
    <property type="project" value="UniProtKB-SubCell"/>
</dbReference>
<dbReference type="GO" id="GO:0008381">
    <property type="term" value="F:mechanosensitive monoatomic ion channel activity"/>
    <property type="evidence" value="ECO:0007669"/>
    <property type="project" value="UniProtKB-UniRule"/>
</dbReference>
<dbReference type="Gene3D" id="1.10.1200.120">
    <property type="entry name" value="Large-conductance mechanosensitive channel, MscL, domain 1"/>
    <property type="match status" value="1"/>
</dbReference>
<dbReference type="HAMAP" id="MF_00115">
    <property type="entry name" value="MscL"/>
    <property type="match status" value="1"/>
</dbReference>
<dbReference type="InterPro" id="IPR019823">
    <property type="entry name" value="Mechanosensitive_channel_CS"/>
</dbReference>
<dbReference type="InterPro" id="IPR001185">
    <property type="entry name" value="MS_channel"/>
</dbReference>
<dbReference type="InterPro" id="IPR037673">
    <property type="entry name" value="MSC/AndL"/>
</dbReference>
<dbReference type="InterPro" id="IPR036019">
    <property type="entry name" value="MscL_channel"/>
</dbReference>
<dbReference type="NCBIfam" id="TIGR00220">
    <property type="entry name" value="mscL"/>
    <property type="match status" value="1"/>
</dbReference>
<dbReference type="NCBIfam" id="NF001843">
    <property type="entry name" value="PRK00567.1-4"/>
    <property type="match status" value="1"/>
</dbReference>
<dbReference type="NCBIfam" id="NF010557">
    <property type="entry name" value="PRK13952.1"/>
    <property type="match status" value="1"/>
</dbReference>
<dbReference type="PANTHER" id="PTHR30266:SF2">
    <property type="entry name" value="LARGE-CONDUCTANCE MECHANOSENSITIVE CHANNEL"/>
    <property type="match status" value="1"/>
</dbReference>
<dbReference type="PANTHER" id="PTHR30266">
    <property type="entry name" value="MECHANOSENSITIVE CHANNEL MSCL"/>
    <property type="match status" value="1"/>
</dbReference>
<dbReference type="Pfam" id="PF01741">
    <property type="entry name" value="MscL"/>
    <property type="match status" value="1"/>
</dbReference>
<dbReference type="PRINTS" id="PR01264">
    <property type="entry name" value="MECHCHANNEL"/>
</dbReference>
<dbReference type="SUPFAM" id="SSF81330">
    <property type="entry name" value="Gated mechanosensitive channel"/>
    <property type="match status" value="1"/>
</dbReference>
<dbReference type="PROSITE" id="PS01327">
    <property type="entry name" value="MSCL"/>
    <property type="match status" value="1"/>
</dbReference>
<reference key="1">
    <citation type="submission" date="2008-04" db="EMBL/GenBank/DDBJ databases">
        <title>Complete sequence of chromosome of Methylobacterium populi BJ001.</title>
        <authorList>
            <consortium name="US DOE Joint Genome Institute"/>
            <person name="Copeland A."/>
            <person name="Lucas S."/>
            <person name="Lapidus A."/>
            <person name="Glavina del Rio T."/>
            <person name="Dalin E."/>
            <person name="Tice H."/>
            <person name="Bruce D."/>
            <person name="Goodwin L."/>
            <person name="Pitluck S."/>
            <person name="Chertkov O."/>
            <person name="Brettin T."/>
            <person name="Detter J.C."/>
            <person name="Han C."/>
            <person name="Kuske C.R."/>
            <person name="Schmutz J."/>
            <person name="Larimer F."/>
            <person name="Land M."/>
            <person name="Hauser L."/>
            <person name="Kyrpides N."/>
            <person name="Mikhailova N."/>
            <person name="Marx C."/>
            <person name="Richardson P."/>
        </authorList>
    </citation>
    <scope>NUCLEOTIDE SEQUENCE [LARGE SCALE GENOMIC DNA]</scope>
    <source>
        <strain>ATCC BAA-705 / NCIMB 13946 / BJ001</strain>
    </source>
</reference>
<evidence type="ECO:0000255" key="1">
    <source>
        <dbReference type="HAMAP-Rule" id="MF_00115"/>
    </source>
</evidence>